<sequence>QSTVHIVGDNTGWSVPSSPNFYSQWAAGKTFRVGDSLQFNFPANAHNVHEMETKQSFDACNFVNSDNDVERTSPVIERLDELGMHYFVCTVGTHCSNGQKLSINVVAANATVSMPPPSSSPPSSVMPPPVMPPPSPS</sequence>
<feature type="chain" id="PRO_0000085553" description="Cucumber peeling cupredoxin">
    <location>
        <begin position="1"/>
        <end position="137"/>
    </location>
</feature>
<feature type="domain" description="Phytocyanin" evidence="1">
    <location>
        <begin position="3"/>
        <end position="107"/>
    </location>
</feature>
<feature type="region of interest" description="Disordered" evidence="2">
    <location>
        <begin position="112"/>
        <end position="137"/>
    </location>
</feature>
<feature type="compositionally biased region" description="Pro residues" evidence="2">
    <location>
        <begin position="114"/>
        <end position="137"/>
    </location>
</feature>
<feature type="binding site">
    <location>
        <position position="46"/>
    </location>
    <ligand>
        <name>Cu cation</name>
        <dbReference type="ChEBI" id="CHEBI:23378"/>
    </ligand>
</feature>
<feature type="binding site">
    <location>
        <position position="89"/>
    </location>
    <ligand>
        <name>Cu cation</name>
        <dbReference type="ChEBI" id="CHEBI:23378"/>
    </ligand>
</feature>
<feature type="binding site">
    <location>
        <position position="94"/>
    </location>
    <ligand>
        <name>Cu cation</name>
        <dbReference type="ChEBI" id="CHEBI:23378"/>
    </ligand>
</feature>
<feature type="binding site">
    <location>
        <position position="99"/>
    </location>
    <ligand>
        <name>Cu cation</name>
        <dbReference type="ChEBI" id="CHEBI:23378"/>
    </ligand>
</feature>
<feature type="modified residue" description="Pyrrolidone carboxylic acid" evidence="3">
    <location>
        <position position="1"/>
    </location>
</feature>
<feature type="modified residue" description="4-hydroxyproline; partial" evidence="3">
    <location>
        <position position="115"/>
    </location>
</feature>
<feature type="modified residue" description="4-hydroxyproline" evidence="3">
    <location>
        <position position="116"/>
    </location>
</feature>
<feature type="modified residue" description="4-hydroxyproline" evidence="3">
    <location>
        <position position="117"/>
    </location>
</feature>
<feature type="modified residue" description="4-hydroxyproline" evidence="3">
    <location>
        <position position="121"/>
    </location>
</feature>
<feature type="modified residue" description="4-hydroxyproline" evidence="3">
    <location>
        <position position="122"/>
    </location>
</feature>
<feature type="modified residue" description="4-hydroxyproline; partial" evidence="3">
    <location>
        <position position="127"/>
    </location>
</feature>
<feature type="modified residue" description="4-hydroxyproline" evidence="3">
    <location>
        <position position="128"/>
    </location>
</feature>
<feature type="modified residue" description="4-hydroxyproline" evidence="3">
    <location>
        <position position="129"/>
    </location>
</feature>
<feature type="modified residue" description="4-hydroxyproline" evidence="3">
    <location>
        <position position="133"/>
    </location>
</feature>
<feature type="modified residue" description="4-hydroxyproline" evidence="3">
    <location>
        <position position="134"/>
    </location>
</feature>
<feature type="modified residue" description="4-hydroxyproline" evidence="3">
    <location>
        <position position="136"/>
    </location>
</feature>
<feature type="glycosylation site" description="N-linked (GlcNAc...) asparagine">
    <location>
        <position position="109"/>
    </location>
</feature>
<feature type="disulfide bond" evidence="1 4">
    <location>
        <begin position="60"/>
        <end position="95"/>
    </location>
</feature>
<feature type="strand" evidence="5">
    <location>
        <begin position="4"/>
        <end position="6"/>
    </location>
</feature>
<feature type="helix" evidence="5">
    <location>
        <begin position="9"/>
        <end position="11"/>
    </location>
</feature>
<feature type="helix" evidence="5">
    <location>
        <begin position="21"/>
        <end position="27"/>
    </location>
</feature>
<feature type="strand" evidence="5">
    <location>
        <begin position="36"/>
        <end position="39"/>
    </location>
</feature>
<feature type="turn" evidence="5">
    <location>
        <begin position="43"/>
        <end position="45"/>
    </location>
</feature>
<feature type="strand" evidence="5">
    <location>
        <begin position="49"/>
        <end position="52"/>
    </location>
</feature>
<feature type="helix" evidence="5">
    <location>
        <begin position="54"/>
        <end position="59"/>
    </location>
</feature>
<feature type="strand" evidence="5">
    <location>
        <begin position="75"/>
        <end position="78"/>
    </location>
</feature>
<feature type="strand" evidence="5">
    <location>
        <begin position="81"/>
        <end position="88"/>
    </location>
</feature>
<feature type="turn" evidence="5">
    <location>
        <begin position="92"/>
        <end position="94"/>
    </location>
</feature>
<feature type="helix" evidence="5">
    <location>
        <begin position="95"/>
        <end position="97"/>
    </location>
</feature>
<feature type="strand" evidence="5">
    <location>
        <begin position="100"/>
        <end position="106"/>
    </location>
</feature>
<protein>
    <recommendedName>
        <fullName>Cucumber peeling cupredoxin</fullName>
        <shortName>CPC</shortName>
    </recommendedName>
    <alternativeName>
        <fullName>Stellacyanin</fullName>
    </alternativeName>
</protein>
<name>CPC_CUCSA</name>
<accession>P29602</accession>
<organism>
    <name type="scientific">Cucumis sativus</name>
    <name type="common">Cucumber</name>
    <dbReference type="NCBI Taxonomy" id="3659"/>
    <lineage>
        <taxon>Eukaryota</taxon>
        <taxon>Viridiplantae</taxon>
        <taxon>Streptophyta</taxon>
        <taxon>Embryophyta</taxon>
        <taxon>Tracheophyta</taxon>
        <taxon>Spermatophyta</taxon>
        <taxon>Magnoliopsida</taxon>
        <taxon>eudicotyledons</taxon>
        <taxon>Gunneridae</taxon>
        <taxon>Pentapetalae</taxon>
        <taxon>rosids</taxon>
        <taxon>fabids</taxon>
        <taxon>Cucurbitales</taxon>
        <taxon>Cucurbitaceae</taxon>
        <taxon>Benincaseae</taxon>
        <taxon>Cucumis</taxon>
    </lineage>
</organism>
<reference key="1">
    <citation type="journal article" date="1992" name="FEBS Lett.">
        <title>The amino acid sequence of a type I copper protein with an unusual serine- and hydroxyproline-rich C-terminal domain isolated from cucumber peelings.</title>
        <authorList>
            <person name="Mann K."/>
            <person name="Schaefer W."/>
            <person name="Thoenes U."/>
            <person name="Messerschmidt A."/>
            <person name="Mehrabian Z."/>
            <person name="Nalbandyan R."/>
        </authorList>
    </citation>
    <scope>PROTEIN SEQUENCE</scope>
    <scope>PYROGLUTAMATE FORMATION AT GLN-1</scope>
    <scope>HYDROXYLATION AT PRO-115; PRO-116; PRO-117; PRO-121; PRO-122; PRO-127; PRO-128; PRO-129; PRO-133; PRO-134 AND PRO-136</scope>
    <source>
        <tissue>Peelings</tissue>
    </source>
</reference>
<reference key="2">
    <citation type="journal article" date="1996" name="Protein Sci.">
        <title>A missing link in cupredoxins: crystal structure of cucumber stellacyanin at 1.6-A resolution.</title>
        <authorList>
            <person name="Hart P.J."/>
            <person name="Nersissian A.M."/>
            <person name="Herrmann R.G."/>
            <person name="Nalbandyan R.M."/>
            <person name="Valentine J.S."/>
            <person name="Eisenberg D."/>
        </authorList>
    </citation>
    <scope>X-RAY CRYSTALLOGRAPHY (1.6 ANGSTROMS)</scope>
    <scope>DISULFIDE BOND</scope>
    <scope>METAL-BINDING SITES HIS-46; CYS-89; HIS-94 AND GLN-99</scope>
</reference>
<evidence type="ECO:0000255" key="1">
    <source>
        <dbReference type="PROSITE-ProRule" id="PRU00818"/>
    </source>
</evidence>
<evidence type="ECO:0000256" key="2">
    <source>
        <dbReference type="SAM" id="MobiDB-lite"/>
    </source>
</evidence>
<evidence type="ECO:0000269" key="3">
    <source>
    </source>
</evidence>
<evidence type="ECO:0000269" key="4">
    <source>
    </source>
</evidence>
<evidence type="ECO:0007829" key="5">
    <source>
        <dbReference type="PDB" id="1JER"/>
    </source>
</evidence>
<proteinExistence type="evidence at protein level"/>
<dbReference type="PIR" id="S27034">
    <property type="entry name" value="SSKV"/>
</dbReference>
<dbReference type="PDB" id="1JER">
    <property type="method" value="X-ray"/>
    <property type="resolution" value="1.60 A"/>
    <property type="chains" value="A=1-137"/>
</dbReference>
<dbReference type="PDBsum" id="1JER"/>
<dbReference type="SMR" id="P29602"/>
<dbReference type="EvolutionaryTrace" id="P29602"/>
<dbReference type="GO" id="GO:0009055">
    <property type="term" value="F:electron transfer activity"/>
    <property type="evidence" value="ECO:0007669"/>
    <property type="project" value="InterPro"/>
</dbReference>
<dbReference type="GO" id="GO:0046872">
    <property type="term" value="F:metal ion binding"/>
    <property type="evidence" value="ECO:0007669"/>
    <property type="project" value="UniProtKB-KW"/>
</dbReference>
<dbReference type="CDD" id="cd13920">
    <property type="entry name" value="Stellacyanin"/>
    <property type="match status" value="1"/>
</dbReference>
<dbReference type="FunFam" id="2.60.40.420:FF:000034">
    <property type="entry name" value="Cupredoxin superfamily protein"/>
    <property type="match status" value="1"/>
</dbReference>
<dbReference type="Gene3D" id="2.60.40.420">
    <property type="entry name" value="Cupredoxins - blue copper proteins"/>
    <property type="match status" value="1"/>
</dbReference>
<dbReference type="InterPro" id="IPR028871">
    <property type="entry name" value="BlueCu_1_BS"/>
</dbReference>
<dbReference type="InterPro" id="IPR008972">
    <property type="entry name" value="Cupredoxin"/>
</dbReference>
<dbReference type="InterPro" id="IPR039391">
    <property type="entry name" value="Phytocyanin-like"/>
</dbReference>
<dbReference type="InterPro" id="IPR003245">
    <property type="entry name" value="Phytocyanin_dom"/>
</dbReference>
<dbReference type="PANTHER" id="PTHR33021">
    <property type="entry name" value="BLUE COPPER PROTEIN"/>
    <property type="match status" value="1"/>
</dbReference>
<dbReference type="PANTHER" id="PTHR33021:SF189">
    <property type="entry name" value="CUCUMBER PEELING CUPREDOXIN-LIKE"/>
    <property type="match status" value="1"/>
</dbReference>
<dbReference type="Pfam" id="PF02298">
    <property type="entry name" value="Cu_bind_like"/>
    <property type="match status" value="1"/>
</dbReference>
<dbReference type="SUPFAM" id="SSF49503">
    <property type="entry name" value="Cupredoxins"/>
    <property type="match status" value="1"/>
</dbReference>
<dbReference type="PROSITE" id="PS00196">
    <property type="entry name" value="COPPER_BLUE"/>
    <property type="match status" value="1"/>
</dbReference>
<dbReference type="PROSITE" id="PS51485">
    <property type="entry name" value="PHYTOCYANIN"/>
    <property type="match status" value="1"/>
</dbReference>
<keyword id="KW-0002">3D-structure</keyword>
<keyword id="KW-0186">Copper</keyword>
<keyword id="KW-0903">Direct protein sequencing</keyword>
<keyword id="KW-1015">Disulfide bond</keyword>
<keyword id="KW-0249">Electron transport</keyword>
<keyword id="KW-0325">Glycoprotein</keyword>
<keyword id="KW-0379">Hydroxylation</keyword>
<keyword id="KW-0479">Metal-binding</keyword>
<keyword id="KW-0873">Pyrrolidone carboxylic acid</keyword>
<keyword id="KW-0813">Transport</keyword>